<accession>A7FMJ8</accession>
<proteinExistence type="inferred from homology"/>
<gene>
    <name type="primary">lsrC</name>
    <name type="ordered locus">YpsIP31758_3522</name>
</gene>
<reference key="1">
    <citation type="journal article" date="2007" name="PLoS Genet.">
        <title>The complete genome sequence of Yersinia pseudotuberculosis IP31758, the causative agent of Far East scarlet-like fever.</title>
        <authorList>
            <person name="Eppinger M."/>
            <person name="Rosovitz M.J."/>
            <person name="Fricke W.F."/>
            <person name="Rasko D.A."/>
            <person name="Kokorina G."/>
            <person name="Fayolle C."/>
            <person name="Lindler L.E."/>
            <person name="Carniel E."/>
            <person name="Ravel J."/>
        </authorList>
    </citation>
    <scope>NUCLEOTIDE SEQUENCE [LARGE SCALE GENOMIC DNA]</scope>
    <source>
        <strain>IP 31758</strain>
    </source>
</reference>
<protein>
    <recommendedName>
        <fullName>Autoinducer 2 import system permease protein LsrC</fullName>
        <shortName>AI-2 import system permease protein LsrC</shortName>
    </recommendedName>
</protein>
<name>LSRC_YERP3</name>
<comment type="function">
    <text evidence="1">Part of the ABC transporter complex LsrABCD involved in autoinducer 2 (AI-2) import. Probably responsible for the translocation of the substrate across the membrane (By similarity).</text>
</comment>
<comment type="subunit">
    <text evidence="1">The complex is composed of two ATP-binding proteins (LsrA), two transmembrane proteins (LsrC and LsrD) and a solute-binding protein (LsrB).</text>
</comment>
<comment type="subcellular location">
    <subcellularLocation>
        <location evidence="1">Cell inner membrane</location>
        <topology evidence="1">Multi-pass membrane protein</topology>
    </subcellularLocation>
</comment>
<comment type="similarity">
    <text evidence="3">Belongs to the binding-protein-dependent transport system permease family. AraH/RbsC subfamily.</text>
</comment>
<organism>
    <name type="scientific">Yersinia pseudotuberculosis serotype O:1b (strain IP 31758)</name>
    <dbReference type="NCBI Taxonomy" id="349747"/>
    <lineage>
        <taxon>Bacteria</taxon>
        <taxon>Pseudomonadati</taxon>
        <taxon>Pseudomonadota</taxon>
        <taxon>Gammaproteobacteria</taxon>
        <taxon>Enterobacterales</taxon>
        <taxon>Yersiniaceae</taxon>
        <taxon>Yersinia</taxon>
    </lineage>
</organism>
<evidence type="ECO:0000250" key="1"/>
<evidence type="ECO:0000255" key="2"/>
<evidence type="ECO:0000305" key="3"/>
<sequence>MLKFIQNNREGTALLAILTLFALLGIIDRNYFSLQTFTMIFSSAQILILLAIGATLVMLTRNIDVSVGSITGLCAVTVGMALNAGFGLAASCLFALLVGMVAGFFNGILVTWLRIPAIVATLGTLGLYRGLMLLLTGGKWIEGLPADLKSLSTPILFSISPIGWLAMLLILAMAWLLGNTAFGRSFYATGDNLQGARQLGVRTDSIRIFAFSMNGVMAALAGIVFASQIGFIPNQTGNGLEMKAIAACVLGGISLLGGTGTIIGAILGAFLLTQIDSVLVLLRLPAWWNDFITGLVLLGVLVFDGRLRCAVERNIRQQKYARFTARAIISDKKTTVSDNTPAASNKKKAAL</sequence>
<keyword id="KW-0997">Cell inner membrane</keyword>
<keyword id="KW-1003">Cell membrane</keyword>
<keyword id="KW-0472">Membrane</keyword>
<keyword id="KW-0812">Transmembrane</keyword>
<keyword id="KW-1133">Transmembrane helix</keyword>
<keyword id="KW-0813">Transport</keyword>
<dbReference type="EMBL" id="CP000720">
    <property type="protein sequence ID" value="ABS49509.1"/>
    <property type="molecule type" value="Genomic_DNA"/>
</dbReference>
<dbReference type="RefSeq" id="WP_012105715.1">
    <property type="nucleotide sequence ID" value="NC_009708.1"/>
</dbReference>
<dbReference type="KEGG" id="ypi:YpsIP31758_3522"/>
<dbReference type="HOGENOM" id="CLU_028880_0_1_6"/>
<dbReference type="Proteomes" id="UP000002412">
    <property type="component" value="Chromosome"/>
</dbReference>
<dbReference type="GO" id="GO:0005886">
    <property type="term" value="C:plasma membrane"/>
    <property type="evidence" value="ECO:0007669"/>
    <property type="project" value="UniProtKB-SubCell"/>
</dbReference>
<dbReference type="GO" id="GO:0022857">
    <property type="term" value="F:transmembrane transporter activity"/>
    <property type="evidence" value="ECO:0007669"/>
    <property type="project" value="InterPro"/>
</dbReference>
<dbReference type="CDD" id="cd06579">
    <property type="entry name" value="TM_PBP1_transp_AraH_like"/>
    <property type="match status" value="1"/>
</dbReference>
<dbReference type="InterPro" id="IPR001851">
    <property type="entry name" value="ABC_transp_permease"/>
</dbReference>
<dbReference type="NCBIfam" id="NF011961">
    <property type="entry name" value="PRK15432.1"/>
    <property type="match status" value="1"/>
</dbReference>
<dbReference type="PANTHER" id="PTHR32196">
    <property type="entry name" value="ABC TRANSPORTER PERMEASE PROTEIN YPHD-RELATED-RELATED"/>
    <property type="match status" value="1"/>
</dbReference>
<dbReference type="PANTHER" id="PTHR32196:SF29">
    <property type="entry name" value="AUTOINDUCER 2 IMPORT SYSTEM PERMEASE PROTEIN LSRC"/>
    <property type="match status" value="1"/>
</dbReference>
<dbReference type="Pfam" id="PF02653">
    <property type="entry name" value="BPD_transp_2"/>
    <property type="match status" value="1"/>
</dbReference>
<feature type="chain" id="PRO_0000351361" description="Autoinducer 2 import system permease protein LsrC">
    <location>
        <begin position="1"/>
        <end position="351"/>
    </location>
</feature>
<feature type="transmembrane region" description="Helical" evidence="2">
    <location>
        <begin position="14"/>
        <end position="34"/>
    </location>
</feature>
<feature type="transmembrane region" description="Helical" evidence="2">
    <location>
        <begin position="39"/>
        <end position="59"/>
    </location>
</feature>
<feature type="transmembrane region" description="Helical" evidence="2">
    <location>
        <begin position="70"/>
        <end position="90"/>
    </location>
</feature>
<feature type="transmembrane region" description="Helical" evidence="2">
    <location>
        <begin position="93"/>
        <end position="113"/>
    </location>
</feature>
<feature type="transmembrane region" description="Helical" evidence="2">
    <location>
        <begin position="115"/>
        <end position="135"/>
    </location>
</feature>
<feature type="transmembrane region" description="Helical" evidence="2">
    <location>
        <begin position="155"/>
        <end position="175"/>
    </location>
</feature>
<feature type="transmembrane region" description="Helical" evidence="2">
    <location>
        <begin position="213"/>
        <end position="233"/>
    </location>
</feature>
<feature type="transmembrane region" description="Helical" evidence="2">
    <location>
        <begin position="252"/>
        <end position="272"/>
    </location>
</feature>
<feature type="transmembrane region" description="Helical" evidence="2">
    <location>
        <begin position="284"/>
        <end position="304"/>
    </location>
</feature>